<name>BETA_ECO55</name>
<evidence type="ECO:0000255" key="1">
    <source>
        <dbReference type="HAMAP-Rule" id="MF_00750"/>
    </source>
</evidence>
<sequence length="556" mass="61848">MQFDYIIIGAGSAGNVLATRLTEDPNTSVLLLEAGGPDYRFDFRTQMPAALAFPLQGKRYNWAYETEPEPFMNNRRMECGRGKGLGGSSLINGMCYIRGNALDLDNWAQEPGLENWSYLDCLPYYRKAETRDVGENDYHGGDGPVSVTTSKPGVNPLFEAMIEAGVQAGYPRTDDLNGYQQEGFGPMDRTVTPQGRRASTARGYLDQAKSRPNLTIRTHAMTDHIIFDGKRAVGVEWLEGDSTIPTRATANKEVLLCAGAIASPQILQRSGVGNAELLAEFDIPLVHELPGVGENLQDHLEMYLQYECKEPVSLYPALQWWNQPKIGAEWLFGGTGVGASNHFEAGGFIRSREEFAWPNIQYHFLPVAINYNGSNAVKEHGFQCHVGSMRSPSRGHVRIKSRDPHQHPAILFNYMSHEQDWQEFRDAIRITREIMHQPALDQYRGREISPGTECQTDEQLDEFVRNHAETAFHPCGTCKMGYDEMSVVDGEGRVHGLEGLRVVDASIMPQIITGNLNATTIMIGEKIADMIRGQEALPRSTAGYFVANGMPVRAKK</sequence>
<protein>
    <recommendedName>
        <fullName evidence="1">Oxygen-dependent choline dehydrogenase</fullName>
        <shortName evidence="1">CDH</shortName>
        <shortName evidence="1">CHD</shortName>
        <ecNumber evidence="1">1.1.99.1</ecNumber>
    </recommendedName>
    <alternativeName>
        <fullName evidence="1">Betaine aldehyde dehydrogenase</fullName>
        <shortName evidence="1">BADH</shortName>
        <ecNumber evidence="1">1.2.1.8</ecNumber>
    </alternativeName>
</protein>
<reference key="1">
    <citation type="journal article" date="2009" name="PLoS Genet.">
        <title>Organised genome dynamics in the Escherichia coli species results in highly diverse adaptive paths.</title>
        <authorList>
            <person name="Touchon M."/>
            <person name="Hoede C."/>
            <person name="Tenaillon O."/>
            <person name="Barbe V."/>
            <person name="Baeriswyl S."/>
            <person name="Bidet P."/>
            <person name="Bingen E."/>
            <person name="Bonacorsi S."/>
            <person name="Bouchier C."/>
            <person name="Bouvet O."/>
            <person name="Calteau A."/>
            <person name="Chiapello H."/>
            <person name="Clermont O."/>
            <person name="Cruveiller S."/>
            <person name="Danchin A."/>
            <person name="Diard M."/>
            <person name="Dossat C."/>
            <person name="Karoui M.E."/>
            <person name="Frapy E."/>
            <person name="Garry L."/>
            <person name="Ghigo J.M."/>
            <person name="Gilles A.M."/>
            <person name="Johnson J."/>
            <person name="Le Bouguenec C."/>
            <person name="Lescat M."/>
            <person name="Mangenot S."/>
            <person name="Martinez-Jehanne V."/>
            <person name="Matic I."/>
            <person name="Nassif X."/>
            <person name="Oztas S."/>
            <person name="Petit M.A."/>
            <person name="Pichon C."/>
            <person name="Rouy Z."/>
            <person name="Ruf C.S."/>
            <person name="Schneider D."/>
            <person name="Tourret J."/>
            <person name="Vacherie B."/>
            <person name="Vallenet D."/>
            <person name="Medigue C."/>
            <person name="Rocha E.P.C."/>
            <person name="Denamur E."/>
        </authorList>
    </citation>
    <scope>NUCLEOTIDE SEQUENCE [LARGE SCALE GENOMIC DNA]</scope>
    <source>
        <strain>55989 / EAEC</strain>
    </source>
</reference>
<dbReference type="EC" id="1.1.99.1" evidence="1"/>
<dbReference type="EC" id="1.2.1.8" evidence="1"/>
<dbReference type="EMBL" id="CU928145">
    <property type="protein sequence ID" value="CAU96190.1"/>
    <property type="molecule type" value="Genomic_DNA"/>
</dbReference>
<dbReference type="RefSeq" id="WP_001159102.1">
    <property type="nucleotide sequence ID" value="NC_011748.1"/>
</dbReference>
<dbReference type="SMR" id="B7L439"/>
<dbReference type="GeneID" id="75206487"/>
<dbReference type="KEGG" id="eck:EC55989_0313"/>
<dbReference type="HOGENOM" id="CLU_002865_7_1_6"/>
<dbReference type="UniPathway" id="UPA00529">
    <property type="reaction ID" value="UER00385"/>
</dbReference>
<dbReference type="Proteomes" id="UP000000746">
    <property type="component" value="Chromosome"/>
</dbReference>
<dbReference type="GO" id="GO:0016020">
    <property type="term" value="C:membrane"/>
    <property type="evidence" value="ECO:0007669"/>
    <property type="project" value="TreeGrafter"/>
</dbReference>
<dbReference type="GO" id="GO:0008802">
    <property type="term" value="F:betaine-aldehyde dehydrogenase (NAD+) activity"/>
    <property type="evidence" value="ECO:0007669"/>
    <property type="project" value="UniProtKB-EC"/>
</dbReference>
<dbReference type="GO" id="GO:0008812">
    <property type="term" value="F:choline dehydrogenase activity"/>
    <property type="evidence" value="ECO:0007669"/>
    <property type="project" value="UniProtKB-UniRule"/>
</dbReference>
<dbReference type="GO" id="GO:0050660">
    <property type="term" value="F:flavin adenine dinucleotide binding"/>
    <property type="evidence" value="ECO:0007669"/>
    <property type="project" value="InterPro"/>
</dbReference>
<dbReference type="GO" id="GO:0019285">
    <property type="term" value="P:glycine betaine biosynthetic process from choline"/>
    <property type="evidence" value="ECO:0007669"/>
    <property type="project" value="UniProtKB-UniRule"/>
</dbReference>
<dbReference type="Gene3D" id="3.50.50.60">
    <property type="entry name" value="FAD/NAD(P)-binding domain"/>
    <property type="match status" value="1"/>
</dbReference>
<dbReference type="Gene3D" id="3.30.560.10">
    <property type="entry name" value="Glucose Oxidase, domain 3"/>
    <property type="match status" value="1"/>
</dbReference>
<dbReference type="HAMAP" id="MF_00750">
    <property type="entry name" value="Choline_dehydrogen"/>
    <property type="match status" value="1"/>
</dbReference>
<dbReference type="InterPro" id="IPR011533">
    <property type="entry name" value="BetA"/>
</dbReference>
<dbReference type="InterPro" id="IPR036188">
    <property type="entry name" value="FAD/NAD-bd_sf"/>
</dbReference>
<dbReference type="InterPro" id="IPR012132">
    <property type="entry name" value="GMC_OxRdtase"/>
</dbReference>
<dbReference type="InterPro" id="IPR000172">
    <property type="entry name" value="GMC_OxRdtase_N"/>
</dbReference>
<dbReference type="InterPro" id="IPR007867">
    <property type="entry name" value="GMC_OxRtase_C"/>
</dbReference>
<dbReference type="NCBIfam" id="TIGR01810">
    <property type="entry name" value="betA"/>
    <property type="match status" value="1"/>
</dbReference>
<dbReference type="NCBIfam" id="NF002550">
    <property type="entry name" value="PRK02106.1"/>
    <property type="match status" value="1"/>
</dbReference>
<dbReference type="PANTHER" id="PTHR11552:SF147">
    <property type="entry name" value="CHOLINE DEHYDROGENASE, MITOCHONDRIAL"/>
    <property type="match status" value="1"/>
</dbReference>
<dbReference type="PANTHER" id="PTHR11552">
    <property type="entry name" value="GLUCOSE-METHANOL-CHOLINE GMC OXIDOREDUCTASE"/>
    <property type="match status" value="1"/>
</dbReference>
<dbReference type="Pfam" id="PF05199">
    <property type="entry name" value="GMC_oxred_C"/>
    <property type="match status" value="1"/>
</dbReference>
<dbReference type="Pfam" id="PF00732">
    <property type="entry name" value="GMC_oxred_N"/>
    <property type="match status" value="1"/>
</dbReference>
<dbReference type="PIRSF" id="PIRSF000137">
    <property type="entry name" value="Alcohol_oxidase"/>
    <property type="match status" value="1"/>
</dbReference>
<dbReference type="SUPFAM" id="SSF54373">
    <property type="entry name" value="FAD-linked reductases, C-terminal domain"/>
    <property type="match status" value="1"/>
</dbReference>
<dbReference type="SUPFAM" id="SSF51905">
    <property type="entry name" value="FAD/NAD(P)-binding domain"/>
    <property type="match status" value="1"/>
</dbReference>
<dbReference type="PROSITE" id="PS00623">
    <property type="entry name" value="GMC_OXRED_1"/>
    <property type="match status" value="1"/>
</dbReference>
<dbReference type="PROSITE" id="PS00624">
    <property type="entry name" value="GMC_OXRED_2"/>
    <property type="match status" value="1"/>
</dbReference>
<feature type="chain" id="PRO_1000148351" description="Oxygen-dependent choline dehydrogenase">
    <location>
        <begin position="1"/>
        <end position="556"/>
    </location>
</feature>
<feature type="active site" description="Proton acceptor" evidence="1">
    <location>
        <position position="473"/>
    </location>
</feature>
<feature type="binding site" evidence="1">
    <location>
        <begin position="4"/>
        <end position="33"/>
    </location>
    <ligand>
        <name>FAD</name>
        <dbReference type="ChEBI" id="CHEBI:57692"/>
    </ligand>
</feature>
<keyword id="KW-0274">FAD</keyword>
<keyword id="KW-0285">Flavoprotein</keyword>
<keyword id="KW-0520">NAD</keyword>
<keyword id="KW-0560">Oxidoreductase</keyword>
<keyword id="KW-1185">Reference proteome</keyword>
<gene>
    <name evidence="1" type="primary">betA</name>
    <name type="ordered locus">EC55989_0313</name>
</gene>
<proteinExistence type="inferred from homology"/>
<comment type="function">
    <text evidence="1">Involved in the biosynthesis of the osmoprotectant glycine betaine. Catalyzes the oxidation of choline to betaine aldehyde and betaine aldehyde to glycine betaine at the same rate.</text>
</comment>
<comment type="catalytic activity">
    <reaction evidence="1">
        <text>choline + A = betaine aldehyde + AH2</text>
        <dbReference type="Rhea" id="RHEA:17433"/>
        <dbReference type="ChEBI" id="CHEBI:13193"/>
        <dbReference type="ChEBI" id="CHEBI:15354"/>
        <dbReference type="ChEBI" id="CHEBI:15710"/>
        <dbReference type="ChEBI" id="CHEBI:17499"/>
        <dbReference type="EC" id="1.1.99.1"/>
    </reaction>
</comment>
<comment type="catalytic activity">
    <reaction evidence="1">
        <text>betaine aldehyde + NAD(+) + H2O = glycine betaine + NADH + 2 H(+)</text>
        <dbReference type="Rhea" id="RHEA:15305"/>
        <dbReference type="ChEBI" id="CHEBI:15377"/>
        <dbReference type="ChEBI" id="CHEBI:15378"/>
        <dbReference type="ChEBI" id="CHEBI:15710"/>
        <dbReference type="ChEBI" id="CHEBI:17750"/>
        <dbReference type="ChEBI" id="CHEBI:57540"/>
        <dbReference type="ChEBI" id="CHEBI:57945"/>
        <dbReference type="EC" id="1.2.1.8"/>
    </reaction>
</comment>
<comment type="cofactor">
    <cofactor evidence="1">
        <name>FAD</name>
        <dbReference type="ChEBI" id="CHEBI:57692"/>
    </cofactor>
</comment>
<comment type="pathway">
    <text evidence="1">Amine and polyamine biosynthesis; betaine biosynthesis via choline pathway; betaine aldehyde from choline (cytochrome c reductase route): step 1/1.</text>
</comment>
<comment type="similarity">
    <text evidence="1">Belongs to the GMC oxidoreductase family.</text>
</comment>
<organism>
    <name type="scientific">Escherichia coli (strain 55989 / EAEC)</name>
    <dbReference type="NCBI Taxonomy" id="585055"/>
    <lineage>
        <taxon>Bacteria</taxon>
        <taxon>Pseudomonadati</taxon>
        <taxon>Pseudomonadota</taxon>
        <taxon>Gammaproteobacteria</taxon>
        <taxon>Enterobacterales</taxon>
        <taxon>Enterobacteriaceae</taxon>
        <taxon>Escherichia</taxon>
    </lineage>
</organism>
<accession>B7L439</accession>